<organism>
    <name type="scientific">Stangeria eriopus</name>
    <name type="common">Natal grass cycad</name>
    <name type="synonym">Lomaria eriopus</name>
    <dbReference type="NCBI Taxonomy" id="34343"/>
    <lineage>
        <taxon>Eukaryota</taxon>
        <taxon>Viridiplantae</taxon>
        <taxon>Streptophyta</taxon>
        <taxon>Embryophyta</taxon>
        <taxon>Tracheophyta</taxon>
        <taxon>Spermatophyta</taxon>
        <taxon>Cycadidae</taxon>
        <taxon>Cycadales</taxon>
        <taxon>Zamiaceae</taxon>
        <taxon>Stangeria</taxon>
    </lineage>
</organism>
<name>CHLB_STAER</name>
<gene>
    <name type="primary">chlB</name>
</gene>
<keyword id="KW-0004">4Fe-4S</keyword>
<keyword id="KW-0067">ATP-binding</keyword>
<keyword id="KW-0149">Chlorophyll biosynthesis</keyword>
<keyword id="KW-0150">Chloroplast</keyword>
<keyword id="KW-0408">Iron</keyword>
<keyword id="KW-0411">Iron-sulfur</keyword>
<keyword id="KW-0479">Metal-binding</keyword>
<keyword id="KW-0547">Nucleotide-binding</keyword>
<keyword id="KW-0560">Oxidoreductase</keyword>
<keyword id="KW-0602">Photosynthesis</keyword>
<keyword id="KW-0934">Plastid</keyword>
<comment type="function">
    <text evidence="1">Component of the dark-operative protochlorophyllide reductase (DPOR) that uses Mg-ATP and reduced ferredoxin to reduce ring D of protochlorophyllide (Pchlide) to form chlorophyllide a (Chlide). This reaction is light-independent. The NB-protein (ChlN-ChlB) is the catalytic component of the complex (By similarity).</text>
</comment>
<comment type="catalytic activity">
    <reaction>
        <text>chlorophyllide a + oxidized 2[4Fe-4S]-[ferredoxin] + 2 ADP + 2 phosphate = protochlorophyllide a + reduced 2[4Fe-4S]-[ferredoxin] + 2 ATP + 2 H2O</text>
        <dbReference type="Rhea" id="RHEA:28202"/>
        <dbReference type="Rhea" id="RHEA-COMP:10002"/>
        <dbReference type="Rhea" id="RHEA-COMP:10004"/>
        <dbReference type="ChEBI" id="CHEBI:15377"/>
        <dbReference type="ChEBI" id="CHEBI:30616"/>
        <dbReference type="ChEBI" id="CHEBI:33722"/>
        <dbReference type="ChEBI" id="CHEBI:33723"/>
        <dbReference type="ChEBI" id="CHEBI:43474"/>
        <dbReference type="ChEBI" id="CHEBI:83348"/>
        <dbReference type="ChEBI" id="CHEBI:83350"/>
        <dbReference type="ChEBI" id="CHEBI:456216"/>
        <dbReference type="EC" id="1.3.7.7"/>
    </reaction>
</comment>
<comment type="cofactor">
    <cofactor evidence="1">
        <name>[4Fe-4S] cluster</name>
        <dbReference type="ChEBI" id="CHEBI:49883"/>
    </cofactor>
    <text evidence="1">Binds 1 [4Fe-4S] cluster per heterodimer. The cluster is bound at the heterodimer interface by residues from both subunits.</text>
</comment>
<comment type="pathway">
    <text>Porphyrin-containing compound metabolism; chlorophyll biosynthesis (light-independent).</text>
</comment>
<comment type="subunit">
    <text evidence="1">Protochlorophyllide reductase is composed of three subunits; ChlL, ChlN and ChlB. Forms a heterotetramer of two ChlB and two ChlN subunits (By similarity).</text>
</comment>
<comment type="subcellular location">
    <subcellularLocation>
        <location>Plastid</location>
        <location>Chloroplast</location>
    </subcellularLocation>
</comment>
<comment type="similarity">
    <text evidence="2">Belongs to the ChlB/BchB/BchZ family.</text>
</comment>
<proteinExistence type="inferred from homology"/>
<protein>
    <recommendedName>
        <fullName>Light-independent protochlorophyllide reductase subunit B</fullName>
        <shortName>DPOR subunit B</shortName>
        <shortName>LI-POR subunit B</shortName>
        <ecNumber>1.3.7.7</ecNumber>
    </recommendedName>
</protein>
<reference key="1">
    <citation type="journal article" date="1996" name="Mol. Phylogenet. Evol.">
        <title>Phylogenetic inferences from chloroplast chlB gene sequences of Nephrolepis exaltata (Filicopsida), Ephedra altissima (Gnetopsida), and diverse land plants.</title>
        <authorList>
            <person name="Boivin R."/>
            <person name="Richard M."/>
            <person name="Beauseigle D."/>
            <person name="Bousquet J."/>
            <person name="Bellemare G."/>
        </authorList>
    </citation>
    <scope>NUCLEOTIDE SEQUENCE [GENOMIC DNA]</scope>
</reference>
<dbReference type="EC" id="1.3.7.7"/>
<dbReference type="EMBL" id="L25776">
    <property type="protein sequence ID" value="AAC37496.1"/>
    <property type="molecule type" value="Genomic_DNA"/>
</dbReference>
<dbReference type="SMR" id="Q33093"/>
<dbReference type="UniPathway" id="UPA00670"/>
<dbReference type="GO" id="GO:0009507">
    <property type="term" value="C:chloroplast"/>
    <property type="evidence" value="ECO:0007669"/>
    <property type="project" value="UniProtKB-SubCell"/>
</dbReference>
<dbReference type="GO" id="GO:0051539">
    <property type="term" value="F:4 iron, 4 sulfur cluster binding"/>
    <property type="evidence" value="ECO:0007669"/>
    <property type="project" value="UniProtKB-KW"/>
</dbReference>
<dbReference type="GO" id="GO:0005524">
    <property type="term" value="F:ATP binding"/>
    <property type="evidence" value="ECO:0007669"/>
    <property type="project" value="UniProtKB-KW"/>
</dbReference>
<dbReference type="GO" id="GO:0046872">
    <property type="term" value="F:metal ion binding"/>
    <property type="evidence" value="ECO:0007669"/>
    <property type="project" value="UniProtKB-KW"/>
</dbReference>
<dbReference type="GO" id="GO:0016491">
    <property type="term" value="F:oxidoreductase activity"/>
    <property type="evidence" value="ECO:0007669"/>
    <property type="project" value="UniProtKB-KW"/>
</dbReference>
<dbReference type="GO" id="GO:0036068">
    <property type="term" value="P:light-independent chlorophyll biosynthetic process"/>
    <property type="evidence" value="ECO:0007669"/>
    <property type="project" value="UniProtKB-UniPathway"/>
</dbReference>
<dbReference type="GO" id="GO:0015979">
    <property type="term" value="P:photosynthesis"/>
    <property type="evidence" value="ECO:0007669"/>
    <property type="project" value="UniProtKB-KW"/>
</dbReference>
<dbReference type="Gene3D" id="3.40.50.1980">
    <property type="entry name" value="Nitrogenase molybdenum iron protein domain"/>
    <property type="match status" value="1"/>
</dbReference>
<dbReference type="InterPro" id="IPR050152">
    <property type="entry name" value="ChlB/BchB/BchZ"/>
</dbReference>
<dbReference type="PANTHER" id="PTHR33712">
    <property type="entry name" value="LIGHT-INDEPENDENT PROTOCHLOROPHYLLIDE REDUCTASE SUBUNIT B"/>
    <property type="match status" value="1"/>
</dbReference>
<dbReference type="PANTHER" id="PTHR33712:SF7">
    <property type="entry name" value="LIGHT-INDEPENDENT PROTOCHLOROPHYLLIDE REDUCTASE SUBUNIT B"/>
    <property type="match status" value="1"/>
</dbReference>
<dbReference type="SUPFAM" id="SSF53807">
    <property type="entry name" value="Helical backbone' metal receptor"/>
    <property type="match status" value="1"/>
</dbReference>
<evidence type="ECO:0000250" key="1"/>
<evidence type="ECO:0000305" key="2"/>
<sequence length="48" mass="5477">RRLLRDLDIKINQVIPEGGSVKDLKSLPKAWFTLVPYSEVGLMTAMYL</sequence>
<feature type="chain" id="PRO_0000219846" description="Light-independent protochlorophyllide reductase subunit B">
    <location>
        <begin position="1" status="less than"/>
        <end position="48"/>
    </location>
</feature>
<feature type="non-terminal residue">
    <location>
        <position position="1"/>
    </location>
</feature>
<accession>Q33093</accession>
<geneLocation type="chloroplast"/>